<protein>
    <recommendedName>
        <fullName evidence="2">Small ribosomal subunit protein uS12</fullName>
    </recommendedName>
    <alternativeName>
        <fullName evidence="3">30S ribosomal protein S12</fullName>
    </alternativeName>
</protein>
<reference key="1">
    <citation type="journal article" date="2007" name="J. Bacteriol.">
        <title>Genome sequence analysis of the emerging human pathogenic acetic acid bacterium Granulibacter bethesdensis.</title>
        <authorList>
            <person name="Greenberg D.E."/>
            <person name="Porcella S.F."/>
            <person name="Zelazny A.M."/>
            <person name="Virtaneva K."/>
            <person name="Sturdevant D.E."/>
            <person name="Kupko J.J. III"/>
            <person name="Barbian K.D."/>
            <person name="Babar A."/>
            <person name="Dorward D.W."/>
            <person name="Holland S.M."/>
        </authorList>
    </citation>
    <scope>NUCLEOTIDE SEQUENCE [LARGE SCALE GENOMIC DNA]</scope>
    <source>
        <strain>ATCC BAA-1260 / CGDNIH1</strain>
    </source>
</reference>
<comment type="function">
    <text evidence="2">With S4 and S5 plays an important role in translational accuracy.</text>
</comment>
<comment type="function">
    <text evidence="2">Interacts with and stabilizes bases of the 16S rRNA that are involved in tRNA selection in the A site and with the mRNA backbone. Located at the interface of the 30S and 50S subunits, it traverses the body of the 30S subunit contacting proteins on the other side and probably holding the rRNA structure together. The combined cluster of proteins S8, S12 and S17 appears to hold together the shoulder and platform of the 30S subunit.</text>
</comment>
<comment type="subunit">
    <text evidence="2">Part of the 30S ribosomal subunit. Contacts proteins S8 and S17. May interact with IF1 in the 30S initiation complex.</text>
</comment>
<comment type="similarity">
    <text evidence="2">Belongs to the universal ribosomal protein uS12 family.</text>
</comment>
<organism>
    <name type="scientific">Granulibacter bethesdensis (strain ATCC BAA-1260 / CGDNIH1)</name>
    <dbReference type="NCBI Taxonomy" id="391165"/>
    <lineage>
        <taxon>Bacteria</taxon>
        <taxon>Pseudomonadati</taxon>
        <taxon>Pseudomonadota</taxon>
        <taxon>Alphaproteobacteria</taxon>
        <taxon>Acetobacterales</taxon>
        <taxon>Acetobacteraceae</taxon>
        <taxon>Granulibacter</taxon>
    </lineage>
</organism>
<gene>
    <name evidence="2" type="primary">rpsL</name>
    <name type="ordered locus">GbCGDNIH1_0550</name>
</gene>
<proteinExistence type="inferred from homology"/>
<evidence type="ECO:0000250" key="1"/>
<evidence type="ECO:0000255" key="2">
    <source>
        <dbReference type="HAMAP-Rule" id="MF_00403"/>
    </source>
</evidence>
<evidence type="ECO:0000305" key="3"/>
<sequence length="123" mass="13776">MPTINQLIAKGREPNKARNKVPALQGCPQKRGVCTRVYTTTPKKPNSALRKVAKVRLTNGYEVVSYIPGEGHNLQEHSVVLIRGGRVKDLPGVRYHILRGVLDTQGIAKRRQRRSLYGAKRPK</sequence>
<dbReference type="EMBL" id="CP000394">
    <property type="protein sequence ID" value="ABI61448.1"/>
    <property type="molecule type" value="Genomic_DNA"/>
</dbReference>
<dbReference type="RefSeq" id="WP_011631258.1">
    <property type="nucleotide sequence ID" value="NC_008343.2"/>
</dbReference>
<dbReference type="SMR" id="Q0BUQ4"/>
<dbReference type="STRING" id="391165.GbCGDNIH1_0550"/>
<dbReference type="GeneID" id="69744803"/>
<dbReference type="KEGG" id="gbe:GbCGDNIH1_0550"/>
<dbReference type="eggNOG" id="COG0048">
    <property type="taxonomic scope" value="Bacteria"/>
</dbReference>
<dbReference type="HOGENOM" id="CLU_104295_1_2_5"/>
<dbReference type="OrthoDB" id="9802366at2"/>
<dbReference type="Proteomes" id="UP000001963">
    <property type="component" value="Chromosome"/>
</dbReference>
<dbReference type="GO" id="GO:0015935">
    <property type="term" value="C:small ribosomal subunit"/>
    <property type="evidence" value="ECO:0007669"/>
    <property type="project" value="InterPro"/>
</dbReference>
<dbReference type="GO" id="GO:0019843">
    <property type="term" value="F:rRNA binding"/>
    <property type="evidence" value="ECO:0007669"/>
    <property type="project" value="UniProtKB-UniRule"/>
</dbReference>
<dbReference type="GO" id="GO:0003735">
    <property type="term" value="F:structural constituent of ribosome"/>
    <property type="evidence" value="ECO:0007669"/>
    <property type="project" value="InterPro"/>
</dbReference>
<dbReference type="GO" id="GO:0000049">
    <property type="term" value="F:tRNA binding"/>
    <property type="evidence" value="ECO:0007669"/>
    <property type="project" value="UniProtKB-UniRule"/>
</dbReference>
<dbReference type="GO" id="GO:0006412">
    <property type="term" value="P:translation"/>
    <property type="evidence" value="ECO:0007669"/>
    <property type="project" value="UniProtKB-UniRule"/>
</dbReference>
<dbReference type="CDD" id="cd03368">
    <property type="entry name" value="Ribosomal_S12"/>
    <property type="match status" value="1"/>
</dbReference>
<dbReference type="FunFam" id="2.40.50.140:FF:000001">
    <property type="entry name" value="30S ribosomal protein S12"/>
    <property type="match status" value="1"/>
</dbReference>
<dbReference type="Gene3D" id="2.40.50.140">
    <property type="entry name" value="Nucleic acid-binding proteins"/>
    <property type="match status" value="1"/>
</dbReference>
<dbReference type="HAMAP" id="MF_00403_B">
    <property type="entry name" value="Ribosomal_uS12_B"/>
    <property type="match status" value="1"/>
</dbReference>
<dbReference type="InterPro" id="IPR012340">
    <property type="entry name" value="NA-bd_OB-fold"/>
</dbReference>
<dbReference type="InterPro" id="IPR006032">
    <property type="entry name" value="Ribosomal_uS12"/>
</dbReference>
<dbReference type="InterPro" id="IPR005679">
    <property type="entry name" value="Ribosomal_uS12_bac"/>
</dbReference>
<dbReference type="NCBIfam" id="TIGR00981">
    <property type="entry name" value="rpsL_bact"/>
    <property type="match status" value="1"/>
</dbReference>
<dbReference type="PANTHER" id="PTHR11652">
    <property type="entry name" value="30S RIBOSOMAL PROTEIN S12 FAMILY MEMBER"/>
    <property type="match status" value="1"/>
</dbReference>
<dbReference type="Pfam" id="PF00164">
    <property type="entry name" value="Ribosom_S12_S23"/>
    <property type="match status" value="1"/>
</dbReference>
<dbReference type="PIRSF" id="PIRSF002133">
    <property type="entry name" value="Ribosomal_S12/S23"/>
    <property type="match status" value="1"/>
</dbReference>
<dbReference type="PRINTS" id="PR01034">
    <property type="entry name" value="RIBOSOMALS12"/>
</dbReference>
<dbReference type="SUPFAM" id="SSF50249">
    <property type="entry name" value="Nucleic acid-binding proteins"/>
    <property type="match status" value="1"/>
</dbReference>
<dbReference type="PROSITE" id="PS00055">
    <property type="entry name" value="RIBOSOMAL_S12"/>
    <property type="match status" value="1"/>
</dbReference>
<feature type="chain" id="PRO_0000263560" description="Small ribosomal subunit protein uS12">
    <location>
        <begin position="1"/>
        <end position="123"/>
    </location>
</feature>
<feature type="modified residue" description="3-methylthioaspartic acid" evidence="1">
    <location>
        <position position="89"/>
    </location>
</feature>
<name>RS12_GRABC</name>
<keyword id="KW-0488">Methylation</keyword>
<keyword id="KW-1185">Reference proteome</keyword>
<keyword id="KW-0687">Ribonucleoprotein</keyword>
<keyword id="KW-0689">Ribosomal protein</keyword>
<keyword id="KW-0694">RNA-binding</keyword>
<keyword id="KW-0699">rRNA-binding</keyword>
<keyword id="KW-0820">tRNA-binding</keyword>
<accession>Q0BUQ4</accession>